<dbReference type="EMBL" id="CR626927">
    <property type="protein sequence ID" value="CAH09653.1"/>
    <property type="molecule type" value="Genomic_DNA"/>
</dbReference>
<dbReference type="RefSeq" id="WP_005791575.1">
    <property type="nucleotide sequence ID" value="NZ_UFTH01000001.1"/>
</dbReference>
<dbReference type="SMR" id="Q5L8D5"/>
<dbReference type="PaxDb" id="272559-BF9343_3872"/>
<dbReference type="GeneID" id="60368954"/>
<dbReference type="KEGG" id="bfs:BF9343_3872"/>
<dbReference type="eggNOG" id="COG0522">
    <property type="taxonomic scope" value="Bacteria"/>
</dbReference>
<dbReference type="HOGENOM" id="CLU_092403_0_2_10"/>
<dbReference type="Proteomes" id="UP000006731">
    <property type="component" value="Chromosome"/>
</dbReference>
<dbReference type="GO" id="GO:0015935">
    <property type="term" value="C:small ribosomal subunit"/>
    <property type="evidence" value="ECO:0007669"/>
    <property type="project" value="InterPro"/>
</dbReference>
<dbReference type="GO" id="GO:0019843">
    <property type="term" value="F:rRNA binding"/>
    <property type="evidence" value="ECO:0007669"/>
    <property type="project" value="UniProtKB-UniRule"/>
</dbReference>
<dbReference type="GO" id="GO:0003735">
    <property type="term" value="F:structural constituent of ribosome"/>
    <property type="evidence" value="ECO:0007669"/>
    <property type="project" value="InterPro"/>
</dbReference>
<dbReference type="GO" id="GO:0042274">
    <property type="term" value="P:ribosomal small subunit biogenesis"/>
    <property type="evidence" value="ECO:0007669"/>
    <property type="project" value="TreeGrafter"/>
</dbReference>
<dbReference type="GO" id="GO:0006412">
    <property type="term" value="P:translation"/>
    <property type="evidence" value="ECO:0007669"/>
    <property type="project" value="UniProtKB-UniRule"/>
</dbReference>
<dbReference type="CDD" id="cd00165">
    <property type="entry name" value="S4"/>
    <property type="match status" value="1"/>
</dbReference>
<dbReference type="FunFam" id="1.10.1050.10:FF:000001">
    <property type="entry name" value="30S ribosomal protein S4"/>
    <property type="match status" value="1"/>
</dbReference>
<dbReference type="FunFam" id="3.10.290.10:FF:000001">
    <property type="entry name" value="30S ribosomal protein S4"/>
    <property type="match status" value="1"/>
</dbReference>
<dbReference type="Gene3D" id="1.10.1050.10">
    <property type="entry name" value="Ribosomal Protein S4 Delta 41, Chain A, domain 1"/>
    <property type="match status" value="1"/>
</dbReference>
<dbReference type="Gene3D" id="3.10.290.10">
    <property type="entry name" value="RNA-binding S4 domain"/>
    <property type="match status" value="1"/>
</dbReference>
<dbReference type="HAMAP" id="MF_01306_B">
    <property type="entry name" value="Ribosomal_uS4_B"/>
    <property type="match status" value="1"/>
</dbReference>
<dbReference type="InterPro" id="IPR022801">
    <property type="entry name" value="Ribosomal_uS4"/>
</dbReference>
<dbReference type="InterPro" id="IPR005709">
    <property type="entry name" value="Ribosomal_uS4_bac-type"/>
</dbReference>
<dbReference type="InterPro" id="IPR018079">
    <property type="entry name" value="Ribosomal_uS4_CS"/>
</dbReference>
<dbReference type="InterPro" id="IPR001912">
    <property type="entry name" value="Ribosomal_uS4_N"/>
</dbReference>
<dbReference type="InterPro" id="IPR002942">
    <property type="entry name" value="S4_RNA-bd"/>
</dbReference>
<dbReference type="InterPro" id="IPR036986">
    <property type="entry name" value="S4_RNA-bd_sf"/>
</dbReference>
<dbReference type="NCBIfam" id="NF003717">
    <property type="entry name" value="PRK05327.1"/>
    <property type="match status" value="1"/>
</dbReference>
<dbReference type="NCBIfam" id="TIGR01017">
    <property type="entry name" value="rpsD_bact"/>
    <property type="match status" value="1"/>
</dbReference>
<dbReference type="PANTHER" id="PTHR11831">
    <property type="entry name" value="30S 40S RIBOSOMAL PROTEIN"/>
    <property type="match status" value="1"/>
</dbReference>
<dbReference type="PANTHER" id="PTHR11831:SF4">
    <property type="entry name" value="SMALL RIBOSOMAL SUBUNIT PROTEIN US4M"/>
    <property type="match status" value="1"/>
</dbReference>
<dbReference type="Pfam" id="PF00163">
    <property type="entry name" value="Ribosomal_S4"/>
    <property type="match status" value="1"/>
</dbReference>
<dbReference type="Pfam" id="PF01479">
    <property type="entry name" value="S4"/>
    <property type="match status" value="1"/>
</dbReference>
<dbReference type="SMART" id="SM01390">
    <property type="entry name" value="Ribosomal_S4"/>
    <property type="match status" value="1"/>
</dbReference>
<dbReference type="SMART" id="SM00363">
    <property type="entry name" value="S4"/>
    <property type="match status" value="1"/>
</dbReference>
<dbReference type="SUPFAM" id="SSF55174">
    <property type="entry name" value="Alpha-L RNA-binding motif"/>
    <property type="match status" value="1"/>
</dbReference>
<dbReference type="PROSITE" id="PS00632">
    <property type="entry name" value="RIBOSOMAL_S4"/>
    <property type="match status" value="1"/>
</dbReference>
<dbReference type="PROSITE" id="PS50889">
    <property type="entry name" value="S4"/>
    <property type="match status" value="1"/>
</dbReference>
<gene>
    <name evidence="1" type="primary">rpsD</name>
    <name type="ordered locus">BF3977</name>
</gene>
<protein>
    <recommendedName>
        <fullName evidence="1">Small ribosomal subunit protein uS4</fullName>
    </recommendedName>
    <alternativeName>
        <fullName evidence="3">30S ribosomal protein S4</fullName>
    </alternativeName>
</protein>
<feature type="chain" id="PRO_0000228877" description="Small ribosomal subunit protein uS4">
    <location>
        <begin position="1"/>
        <end position="201"/>
    </location>
</feature>
<feature type="domain" description="S4 RNA-binding" evidence="1">
    <location>
        <begin position="92"/>
        <end position="155"/>
    </location>
</feature>
<feature type="region of interest" description="Disordered" evidence="2">
    <location>
        <begin position="28"/>
        <end position="47"/>
    </location>
</feature>
<organism>
    <name type="scientific">Bacteroides fragilis (strain ATCC 25285 / DSM 2151 / CCUG 4856 / JCM 11019 / LMG 10263 / NCTC 9343 / Onslow / VPI 2553 / EN-2)</name>
    <dbReference type="NCBI Taxonomy" id="272559"/>
    <lineage>
        <taxon>Bacteria</taxon>
        <taxon>Pseudomonadati</taxon>
        <taxon>Bacteroidota</taxon>
        <taxon>Bacteroidia</taxon>
        <taxon>Bacteroidales</taxon>
        <taxon>Bacteroidaceae</taxon>
        <taxon>Bacteroides</taxon>
    </lineage>
</organism>
<evidence type="ECO:0000255" key="1">
    <source>
        <dbReference type="HAMAP-Rule" id="MF_01306"/>
    </source>
</evidence>
<evidence type="ECO:0000256" key="2">
    <source>
        <dbReference type="SAM" id="MobiDB-lite"/>
    </source>
</evidence>
<evidence type="ECO:0000305" key="3"/>
<reference key="1">
    <citation type="journal article" date="2005" name="Science">
        <title>Extensive DNA inversions in the B. fragilis genome control variable gene expression.</title>
        <authorList>
            <person name="Cerdeno-Tarraga A.-M."/>
            <person name="Patrick S."/>
            <person name="Crossman L.C."/>
            <person name="Blakely G."/>
            <person name="Abratt V."/>
            <person name="Lennard N."/>
            <person name="Poxton I."/>
            <person name="Duerden B."/>
            <person name="Harris B."/>
            <person name="Quail M.A."/>
            <person name="Barron A."/>
            <person name="Clark L."/>
            <person name="Corton C."/>
            <person name="Doggett J."/>
            <person name="Holden M.T.G."/>
            <person name="Larke N."/>
            <person name="Line A."/>
            <person name="Lord A."/>
            <person name="Norbertczak H."/>
            <person name="Ormond D."/>
            <person name="Price C."/>
            <person name="Rabbinowitsch E."/>
            <person name="Woodward J."/>
            <person name="Barrell B.G."/>
            <person name="Parkhill J."/>
        </authorList>
    </citation>
    <scope>NUCLEOTIDE SEQUENCE [LARGE SCALE GENOMIC DNA]</scope>
    <source>
        <strain>ATCC 25285 / DSM 2151 / CCUG 4856 / JCM 11019 / LMG 10263 / NCTC 9343 / Onslow / VPI 2553 / EN-2</strain>
    </source>
</reference>
<sequence>MARYTGPKSRIARKFGEGIFGADKVLSKKNYPPGQHGNSRKRKTSEYGIQLREKQKAKYTYGVLEKQFRNLFEKAATAKGITGEVLLQMLEGRLDNIVFRLGIAPTRAAARQLVGHKHITVDGQVVNIPSYAVKPGQLIGVRERSKSLEVIANSLAGFNHSKYAWLEWDEASKVGKLLHIPERADIPENIKEHLIVELYSK</sequence>
<keyword id="KW-0687">Ribonucleoprotein</keyword>
<keyword id="KW-0689">Ribosomal protein</keyword>
<keyword id="KW-0694">RNA-binding</keyword>
<keyword id="KW-0699">rRNA-binding</keyword>
<accession>Q5L8D5</accession>
<comment type="function">
    <text evidence="1">One of the primary rRNA binding proteins, it binds directly to 16S rRNA where it nucleates assembly of the body of the 30S subunit.</text>
</comment>
<comment type="function">
    <text evidence="1">With S5 and S12 plays an important role in translational accuracy.</text>
</comment>
<comment type="subunit">
    <text evidence="1">Part of the 30S ribosomal subunit. Contacts protein S5. The interaction surface between S4 and S5 is involved in control of translational fidelity.</text>
</comment>
<comment type="similarity">
    <text evidence="1">Belongs to the universal ribosomal protein uS4 family.</text>
</comment>
<name>RS4_BACFN</name>
<proteinExistence type="inferred from homology"/>